<organism>
    <name type="scientific">Bungarus multicinctus</name>
    <name type="common">Many-banded krait</name>
    <dbReference type="NCBI Taxonomy" id="8616"/>
    <lineage>
        <taxon>Eukaryota</taxon>
        <taxon>Metazoa</taxon>
        <taxon>Chordata</taxon>
        <taxon>Craniata</taxon>
        <taxon>Vertebrata</taxon>
        <taxon>Euteleostomi</taxon>
        <taxon>Lepidosauria</taxon>
        <taxon>Squamata</taxon>
        <taxon>Bifurcata</taxon>
        <taxon>Unidentata</taxon>
        <taxon>Episquamata</taxon>
        <taxon>Toxicofera</taxon>
        <taxon>Serpentes</taxon>
        <taxon>Colubroidea</taxon>
        <taxon>Elapidae</taxon>
        <taxon>Bungarinae</taxon>
        <taxon>Bungarus</taxon>
    </lineage>
</organism>
<protein>
    <recommendedName>
        <fullName evidence="4">Kappa-2-bungarotoxin</fullName>
    </recommendedName>
    <alternativeName>
        <fullName evidence="3">Kappa-neurotoxin CB1</fullName>
    </alternativeName>
</protein>
<accession>P15816</accession>
<keyword id="KW-0008">Acetylcholine receptor inhibiting toxin</keyword>
<keyword id="KW-0903">Direct protein sequencing</keyword>
<keyword id="KW-1015">Disulfide bond</keyword>
<keyword id="KW-0872">Ion channel impairing toxin</keyword>
<keyword id="KW-0528">Neurotoxin</keyword>
<keyword id="KW-0629">Postsynaptic neurotoxin</keyword>
<keyword id="KW-0964">Secreted</keyword>
<keyword id="KW-0732">Signal</keyword>
<keyword id="KW-0800">Toxin</keyword>
<proteinExistence type="evidence at protein level"/>
<comment type="function">
    <text evidence="1 2">Postsynaptic neurotoxin that binds and inhibits neuronal nicotinic acetylcholine receptors (nAChR) with high affinity (IC(50)&lt;100 nM). Is a selective, and slowly reversible antagonist of alpha-3/CHRNA3-containing and some alpha-4/CHRNA4-containing AChRs.</text>
</comment>
<comment type="subunit">
    <text evidence="2">Homodimer and heterodimer with kappa 3-bungarotoxin; non-covalently linked.</text>
</comment>
<comment type="subcellular location">
    <subcellularLocation>
        <location evidence="2">Secreted</location>
    </subcellularLocation>
</comment>
<comment type="tissue specificity">
    <text evidence="5">Expressed by the venom gland.</text>
</comment>
<comment type="similarity">
    <text evidence="5">Belongs to the three-finger toxin family. Long-chain subfamily. Kappa-neurotoxin sub-subfamily.</text>
</comment>
<reference key="1">
    <citation type="journal article" date="1990" name="Nucleic Acids Res.">
        <title>cDNA deduced amino-acid sequences of two novel kappa-neurotoxins from Bungarus multicinctus.</title>
        <authorList>
            <person name="Danse J.-M."/>
            <person name="Garnier J.-M."/>
        </authorList>
    </citation>
    <scope>NUCLEOTIDE SEQUENCE [MRNA]</scope>
    <source>
        <tissue>Venom gland</tissue>
    </source>
</reference>
<reference key="2">
    <citation type="journal article" date="1990" name="Brain Res.">
        <title>Kappa 2-bungarotoxin and kappa 3-bungarotoxin: two new neuronal nicotinic receptor antagonists isolated from the venom of Bungarus multicinctus.</title>
        <authorList>
            <person name="Chiappinelli V.A."/>
            <person name="Wolf K.M."/>
            <person name="Grant G.A."/>
            <person name="Chen S.-J."/>
        </authorList>
    </citation>
    <scope>PROTEIN SEQUENCE OF 23-67</scope>
    <scope>FUNCTION</scope>
    <scope>SUBCELLULAR LOCATION</scope>
</reference>
<sequence>MKTLLLTLVVVTIVCLDLGYTKTCLKTPSSTPQTCPQGQDICFLKVSCEQFCPIRGPVIEQGCAATCPEFRSNDRSLLCCTTDNCNH</sequence>
<evidence type="ECO:0000250" key="1">
    <source>
        <dbReference type="UniProtKB" id="P01398"/>
    </source>
</evidence>
<evidence type="ECO:0000269" key="2">
    <source>
    </source>
</evidence>
<evidence type="ECO:0000303" key="3">
    <source>
    </source>
</evidence>
<evidence type="ECO:0000303" key="4">
    <source>
    </source>
</evidence>
<evidence type="ECO:0000305" key="5"/>
<name>3LK2_BUNMU</name>
<feature type="signal peptide">
    <location>
        <begin position="1"/>
        <end position="21"/>
    </location>
</feature>
<feature type="chain" id="PRO_0000035411" description="Kappa-2-bungarotoxin">
    <location>
        <begin position="22"/>
        <end position="87"/>
    </location>
</feature>
<feature type="disulfide bond" evidence="1">
    <location>
        <begin position="24"/>
        <end position="42"/>
    </location>
</feature>
<feature type="disulfide bond" evidence="1">
    <location>
        <begin position="35"/>
        <end position="63"/>
    </location>
</feature>
<feature type="disulfide bond" evidence="1">
    <location>
        <begin position="48"/>
        <end position="52"/>
    </location>
</feature>
<feature type="disulfide bond" evidence="1">
    <location>
        <begin position="67"/>
        <end position="79"/>
    </location>
</feature>
<feature type="disulfide bond" evidence="1">
    <location>
        <begin position="80"/>
        <end position="85"/>
    </location>
</feature>
<dbReference type="EMBL" id="X51412">
    <property type="protein sequence ID" value="CAA35774.1"/>
    <property type="molecule type" value="mRNA"/>
</dbReference>
<dbReference type="PIR" id="A60549">
    <property type="entry name" value="A60549"/>
</dbReference>
<dbReference type="PIR" id="S08399">
    <property type="entry name" value="S08399"/>
</dbReference>
<dbReference type="SMR" id="P15816"/>
<dbReference type="GO" id="GO:0005576">
    <property type="term" value="C:extracellular region"/>
    <property type="evidence" value="ECO:0007669"/>
    <property type="project" value="UniProtKB-SubCell"/>
</dbReference>
<dbReference type="GO" id="GO:0030550">
    <property type="term" value="F:acetylcholine receptor inhibitor activity"/>
    <property type="evidence" value="ECO:0007669"/>
    <property type="project" value="UniProtKB-KW"/>
</dbReference>
<dbReference type="GO" id="GO:0099106">
    <property type="term" value="F:ion channel regulator activity"/>
    <property type="evidence" value="ECO:0007669"/>
    <property type="project" value="UniProtKB-KW"/>
</dbReference>
<dbReference type="GO" id="GO:0090729">
    <property type="term" value="F:toxin activity"/>
    <property type="evidence" value="ECO:0007669"/>
    <property type="project" value="UniProtKB-KW"/>
</dbReference>
<dbReference type="CDD" id="cd00206">
    <property type="entry name" value="TFP_snake_toxin"/>
    <property type="match status" value="1"/>
</dbReference>
<dbReference type="Gene3D" id="2.10.60.10">
    <property type="entry name" value="CD59"/>
    <property type="match status" value="1"/>
</dbReference>
<dbReference type="InterPro" id="IPR003571">
    <property type="entry name" value="Snake_3FTx"/>
</dbReference>
<dbReference type="InterPro" id="IPR045860">
    <property type="entry name" value="Snake_toxin-like_sf"/>
</dbReference>
<dbReference type="InterPro" id="IPR018354">
    <property type="entry name" value="Snake_toxin_con_site"/>
</dbReference>
<dbReference type="InterPro" id="IPR054131">
    <property type="entry name" value="Toxin_cobra-type"/>
</dbReference>
<dbReference type="Pfam" id="PF21947">
    <property type="entry name" value="Toxin_cobra-type"/>
    <property type="match status" value="1"/>
</dbReference>
<dbReference type="SUPFAM" id="SSF57302">
    <property type="entry name" value="Snake toxin-like"/>
    <property type="match status" value="1"/>
</dbReference>
<dbReference type="PROSITE" id="PS00272">
    <property type="entry name" value="SNAKE_TOXIN"/>
    <property type="match status" value="1"/>
</dbReference>